<protein>
    <recommendedName>
        <fullName>RNA-directed RNA polymerase L</fullName>
        <shortName>Protein L</shortName>
    </recommendedName>
    <alternativeName>
        <fullName>Large structural protein</fullName>
    </alternativeName>
    <alternativeName>
        <fullName>Replicase</fullName>
    </alternativeName>
    <alternativeName>
        <fullName>Transcriptase</fullName>
    </alternativeName>
    <domain>
        <recommendedName>
            <fullName>RNA-directed RNA polymerase</fullName>
            <ecNumber evidence="3">2.7.7.48</ecNumber>
        </recommendedName>
    </domain>
    <domain>
        <recommendedName>
            <fullName evidence="2">GTP phosphohydrolase</fullName>
            <ecNumber evidence="2">3.6.1.-</ecNumber>
        </recommendedName>
    </domain>
    <domain>
        <recommendedName>
            <fullName evidence="7">GDP polyribonucleotidyltransferase</fullName>
            <ecNumber evidence="2">2.7.7.88</ecNumber>
        </recommendedName>
        <alternativeName>
            <fullName evidence="7">PRNTase</fullName>
        </alternativeName>
    </domain>
    <domain>
        <recommendedName>
            <fullName evidence="7">mRNA cap methyltransferase</fullName>
            <ecNumber evidence="2">2.1.1.375</ecNumber>
        </recommendedName>
        <alternativeName>
            <fullName evidence="2">mRNA (guanine-N(7)-)-methyltransferase</fullName>
            <shortName evidence="2">G-N7-MTase</shortName>
        </alternativeName>
        <alternativeName>
            <fullName evidence="2">mRNA (nucleoside-2'-O-)-methyltransferase</fullName>
            <shortName evidence="2">N1-2'-O-MTase</shortName>
        </alternativeName>
    </domain>
</protein>
<organism>
    <name type="scientific">Nipah virus</name>
    <dbReference type="NCBI Taxonomy" id="3052225"/>
    <lineage>
        <taxon>Viruses</taxon>
        <taxon>Riboviria</taxon>
        <taxon>Orthornavirae</taxon>
        <taxon>Negarnaviricota</taxon>
        <taxon>Haploviricotina</taxon>
        <taxon>Monjiviricetes</taxon>
        <taxon>Mononegavirales</taxon>
        <taxon>Paramyxoviridae</taxon>
        <taxon>Orthoparamyxovirinae</taxon>
        <taxon>Henipavirus</taxon>
    </lineage>
</organism>
<reference key="1">
    <citation type="journal article" date="2000" name="Science">
        <title>Nipah virus: a recently emergent deadly paramyxovirus.</title>
        <authorList>
            <person name="Chua K.B."/>
            <person name="Bellini W.J."/>
            <person name="Rota P.A."/>
            <person name="Harcourt B.H."/>
            <person name="Tamin A."/>
            <person name="Lam S.K."/>
            <person name="Ksiazek T.G."/>
            <person name="Rollin P.E."/>
            <person name="Zaki S.R."/>
            <person name="Shieh W."/>
            <person name="Goldsmith C.S."/>
            <person name="Gubler D.J."/>
            <person name="Roehrig J.T."/>
            <person name="Eaton B."/>
            <person name="Gould A.R."/>
            <person name="Olson J."/>
            <person name="Field H."/>
            <person name="Daniels P."/>
            <person name="Ling A.E."/>
            <person name="Peters C.J."/>
            <person name="Anderson L.J."/>
            <person name="Mahy B.W."/>
        </authorList>
    </citation>
    <scope>NUCLEOTIDE SEQUENCE [GENOMIC RNA]</scope>
</reference>
<reference key="2">
    <citation type="journal article" date="2001" name="Virology">
        <title>Molecular characterization of the polymerase gene and genomic termini of Nipah virus.</title>
        <authorList>
            <person name="Harcourt B.H."/>
            <person name="Tamin A."/>
            <person name="Halpin K."/>
            <person name="Ksiazek T.G."/>
            <person name="Rollin P.E."/>
            <person name="Bellini W.J."/>
            <person name="Rota P.A."/>
        </authorList>
    </citation>
    <scope>NUCLEOTIDE SEQUENCE [GENOMIC RNA]</scope>
</reference>
<reference key="3">
    <citation type="journal article" date="2001" name="J. Gen. Virol.">
        <title>Complete nucleotide sequences of Nipah virus isolates from Malaysia.</title>
        <authorList>
            <person name="Chan Y.P."/>
            <person name="Chua K.B."/>
            <person name="Koh C.L."/>
            <person name="Lim M.E."/>
            <person name="Lam S.K."/>
        </authorList>
    </citation>
    <scope>NUCLEOTIDE SEQUENCE [GENOMIC RNA]</scope>
    <source>
        <strain>Isolate UMMC1</strain>
        <strain>Isolate UMMC2</strain>
    </source>
</reference>
<reference key="4">
    <citation type="journal article" date="2004" name="Emerg. Infect. Dis.">
        <title>Isolation and molecular identification of Nipah virus from pigs.</title>
        <authorList>
            <person name="Abubakar S."/>
            <person name="Chang L.Y."/>
            <person name="Mohdali A.R."/>
            <person name="Sharifah S.H."/>
            <person name="Yusoff K."/>
            <person name="Zamrod Z."/>
        </authorList>
    </citation>
    <scope>NUCLEOTIDE SEQUENCE [GENOMIC RNA]</scope>
    <source>
        <strain>Isolate NiV/MY/99/UM-0128</strain>
        <strain>Isolate NiV/MY/99/VRI-2794</strain>
        <strain>Isolate NV/MY/99/VRI-1413</strain>
    </source>
</reference>
<feature type="chain" id="PRO_0000236011" description="RNA-directed RNA polymerase L">
    <location>
        <begin position="1"/>
        <end position="2244"/>
    </location>
</feature>
<feature type="domain" description="RdRp catalytic" evidence="5">
    <location>
        <begin position="715"/>
        <end position="899"/>
    </location>
</feature>
<feature type="domain" description="Mononegavirus-type SAM-dependent 2'-O-MTase" evidence="6">
    <location>
        <begin position="1810"/>
        <end position="2017"/>
    </location>
</feature>
<feature type="binding site" evidence="4">
    <location>
        <begin position="1840"/>
        <end position="1849"/>
    </location>
    <ligand>
        <name>ATP</name>
        <dbReference type="ChEBI" id="CHEBI:30616"/>
    </ligand>
</feature>
<feature type="sequence variant" description="In strain: Isolate NiV/MY/99/VRI-0626.">
    <original>T</original>
    <variation>N</variation>
    <location>
        <position position="223"/>
    </location>
</feature>
<feature type="sequence variant" description="In strain: Isolate NiV/MY/99/UM-0128, Isolate NiV/MY/99/VRI-2794, Isolate UMMC1 and Isolate NiV/MY/99/VRI-0626.">
    <original>S</original>
    <variation>F</variation>
    <location>
        <position position="1645"/>
    </location>
</feature>
<feature type="sequence variant" description="In strain: Isolate NiV/MY/99/VRI-0626.">
    <original>M</original>
    <variation>V</variation>
    <location>
        <position position="1753"/>
    </location>
</feature>
<feature type="sequence variant" description="In strain: Isolate NiV/MY/99/VRI-0626.">
    <original>H</original>
    <variation>N</variation>
    <location>
        <position position="2039"/>
    </location>
</feature>
<feature type="turn" evidence="9">
    <location>
        <begin position="8"/>
        <end position="10"/>
    </location>
</feature>
<feature type="helix" evidence="8">
    <location>
        <begin position="23"/>
        <end position="33"/>
    </location>
</feature>
<feature type="helix" evidence="8">
    <location>
        <begin position="44"/>
        <end position="56"/>
    </location>
</feature>
<feature type="helix" evidence="8">
    <location>
        <begin position="61"/>
        <end position="76"/>
    </location>
</feature>
<feature type="strand" evidence="8">
    <location>
        <begin position="77"/>
        <end position="79"/>
    </location>
</feature>
<feature type="helix" evidence="8">
    <location>
        <begin position="80"/>
        <end position="82"/>
    </location>
</feature>
<feature type="turn" evidence="8">
    <location>
        <begin position="88"/>
        <end position="91"/>
    </location>
</feature>
<feature type="helix" evidence="8">
    <location>
        <begin position="92"/>
        <end position="95"/>
    </location>
</feature>
<feature type="turn" evidence="8">
    <location>
        <begin position="101"/>
        <end position="104"/>
    </location>
</feature>
<feature type="helix" evidence="8">
    <location>
        <begin position="105"/>
        <end position="136"/>
    </location>
</feature>
<feature type="helix" evidence="8">
    <location>
        <begin position="148"/>
        <end position="154"/>
    </location>
</feature>
<feature type="helix" evidence="8">
    <location>
        <begin position="157"/>
        <end position="162"/>
    </location>
</feature>
<feature type="helix" evidence="8">
    <location>
        <begin position="167"/>
        <end position="186"/>
    </location>
</feature>
<feature type="helix" evidence="8">
    <location>
        <begin position="190"/>
        <end position="192"/>
    </location>
</feature>
<feature type="strand" evidence="9">
    <location>
        <begin position="193"/>
        <end position="195"/>
    </location>
</feature>
<feature type="strand" evidence="8">
    <location>
        <begin position="199"/>
        <end position="202"/>
    </location>
</feature>
<feature type="strand" evidence="8">
    <location>
        <begin position="204"/>
        <end position="210"/>
    </location>
</feature>
<feature type="strand" evidence="8">
    <location>
        <begin position="215"/>
        <end position="221"/>
    </location>
</feature>
<feature type="strand" evidence="8">
    <location>
        <begin position="224"/>
        <end position="230"/>
    </location>
</feature>
<feature type="helix" evidence="8">
    <location>
        <begin position="232"/>
        <end position="254"/>
    </location>
</feature>
<feature type="turn" evidence="8">
    <location>
        <begin position="257"/>
        <end position="260"/>
    </location>
</feature>
<feature type="helix" evidence="8">
    <location>
        <begin position="261"/>
        <end position="272"/>
    </location>
</feature>
<feature type="helix" evidence="8">
    <location>
        <begin position="273"/>
        <end position="275"/>
    </location>
</feature>
<feature type="helix" evidence="8">
    <location>
        <begin position="276"/>
        <end position="279"/>
    </location>
</feature>
<feature type="helix" evidence="8">
    <location>
        <begin position="280"/>
        <end position="282"/>
    </location>
</feature>
<feature type="helix" evidence="8">
    <location>
        <begin position="283"/>
        <end position="287"/>
    </location>
</feature>
<feature type="helix" evidence="8">
    <location>
        <begin position="290"/>
        <end position="299"/>
    </location>
</feature>
<feature type="helix" evidence="8">
    <location>
        <begin position="305"/>
        <end position="307"/>
    </location>
</feature>
<feature type="helix" evidence="8">
    <location>
        <begin position="310"/>
        <end position="326"/>
    </location>
</feature>
<feature type="helix" evidence="8">
    <location>
        <begin position="331"/>
        <end position="345"/>
    </location>
</feature>
<feature type="helix" evidence="8">
    <location>
        <begin position="350"/>
        <end position="353"/>
    </location>
</feature>
<feature type="helix" evidence="8">
    <location>
        <begin position="354"/>
        <end position="361"/>
    </location>
</feature>
<feature type="helix" evidence="8">
    <location>
        <begin position="370"/>
        <end position="381"/>
    </location>
</feature>
<feature type="strand" evidence="9">
    <location>
        <begin position="385"/>
        <end position="388"/>
    </location>
</feature>
<feature type="helix" evidence="8">
    <location>
        <begin position="389"/>
        <end position="408"/>
    </location>
</feature>
<feature type="turn" evidence="8">
    <location>
        <begin position="409"/>
        <end position="412"/>
    </location>
</feature>
<feature type="strand" evidence="8">
    <location>
        <begin position="417"/>
        <end position="419"/>
    </location>
</feature>
<feature type="helix" evidence="8">
    <location>
        <begin position="426"/>
        <end position="434"/>
    </location>
</feature>
<feature type="helix" evidence="8">
    <location>
        <begin position="440"/>
        <end position="445"/>
    </location>
</feature>
<feature type="turn" evidence="8">
    <location>
        <begin position="448"/>
        <end position="452"/>
    </location>
</feature>
<feature type="strand" evidence="10">
    <location>
        <begin position="463"/>
        <end position="465"/>
    </location>
</feature>
<feature type="helix" evidence="8">
    <location>
        <begin position="468"/>
        <end position="471"/>
    </location>
</feature>
<feature type="helix" evidence="8">
    <location>
        <begin position="480"/>
        <end position="482"/>
    </location>
</feature>
<feature type="helix" evidence="8">
    <location>
        <begin position="489"/>
        <end position="491"/>
    </location>
</feature>
<feature type="helix" evidence="8">
    <location>
        <begin position="505"/>
        <end position="511"/>
    </location>
</feature>
<feature type="helix" evidence="8">
    <location>
        <begin position="517"/>
        <end position="525"/>
    </location>
</feature>
<feature type="turn" evidence="8">
    <location>
        <begin position="529"/>
        <end position="531"/>
    </location>
</feature>
<feature type="strand" evidence="8">
    <location>
        <begin position="538"/>
        <end position="541"/>
    </location>
</feature>
<feature type="strand" evidence="10">
    <location>
        <begin position="547"/>
        <end position="549"/>
    </location>
</feature>
<feature type="strand" evidence="8">
    <location>
        <begin position="552"/>
        <end position="556"/>
    </location>
</feature>
<feature type="helix" evidence="8">
    <location>
        <begin position="558"/>
        <end position="573"/>
    </location>
</feature>
<feature type="helix" evidence="8">
    <location>
        <begin position="575"/>
        <end position="577"/>
    </location>
</feature>
<feature type="helix" evidence="9">
    <location>
        <begin position="578"/>
        <end position="580"/>
    </location>
</feature>
<feature type="strand" evidence="9">
    <location>
        <begin position="581"/>
        <end position="583"/>
    </location>
</feature>
<feature type="helix" evidence="9">
    <location>
        <begin position="588"/>
        <end position="597"/>
    </location>
</feature>
<feature type="strand" evidence="8">
    <location>
        <begin position="713"/>
        <end position="720"/>
    </location>
</feature>
<feature type="helix" evidence="8">
    <location>
        <begin position="726"/>
        <end position="729"/>
    </location>
</feature>
<feature type="helix" evidence="8">
    <location>
        <begin position="732"/>
        <end position="746"/>
    </location>
</feature>
<feature type="helix" evidence="8">
    <location>
        <begin position="755"/>
        <end position="759"/>
    </location>
</feature>
<feature type="strand" evidence="8">
    <location>
        <begin position="763"/>
        <end position="766"/>
    </location>
</feature>
<feature type="helix" evidence="8">
    <location>
        <begin position="781"/>
        <end position="783"/>
    </location>
</feature>
<feature type="strand" evidence="8">
    <location>
        <begin position="786"/>
        <end position="793"/>
    </location>
</feature>
<feature type="helix" evidence="8">
    <location>
        <begin position="803"/>
        <end position="821"/>
    </location>
</feature>
<feature type="strand" evidence="8">
    <location>
        <begin position="824"/>
        <end position="828"/>
    </location>
</feature>
<feature type="strand" evidence="8">
    <location>
        <begin position="831"/>
        <end position="833"/>
    </location>
</feature>
<feature type="strand" evidence="8">
    <location>
        <begin position="835"/>
        <end position="842"/>
    </location>
</feature>
<feature type="helix" evidence="8">
    <location>
        <begin position="848"/>
        <end position="873"/>
    </location>
</feature>
<feature type="strand" evidence="9">
    <location>
        <begin position="879"/>
        <end position="881"/>
    </location>
</feature>
<feature type="strand" evidence="8">
    <location>
        <begin position="883"/>
        <end position="891"/>
    </location>
</feature>
<feature type="strand" evidence="8">
    <location>
        <begin position="894"/>
        <end position="897"/>
    </location>
</feature>
<feature type="helix" evidence="8">
    <location>
        <begin position="905"/>
        <end position="909"/>
    </location>
</feature>
<feature type="strand" evidence="8">
    <location>
        <begin position="917"/>
        <end position="919"/>
    </location>
</feature>
<feature type="helix" evidence="8">
    <location>
        <begin position="923"/>
        <end position="940"/>
    </location>
</feature>
<feature type="helix" evidence="8">
    <location>
        <begin position="944"/>
        <end position="964"/>
    </location>
</feature>
<feature type="helix" evidence="8">
    <location>
        <begin position="973"/>
        <end position="981"/>
    </location>
</feature>
<feature type="helix" evidence="8">
    <location>
        <begin position="983"/>
        <end position="991"/>
    </location>
</feature>
<feature type="helix" evidence="8">
    <location>
        <begin position="994"/>
        <end position="996"/>
    </location>
</feature>
<feature type="strand" evidence="8">
    <location>
        <begin position="998"/>
        <end position="1000"/>
    </location>
</feature>
<feature type="helix" evidence="8">
    <location>
        <begin position="1004"/>
        <end position="1007"/>
    </location>
</feature>
<feature type="helix" evidence="8">
    <location>
        <begin position="1015"/>
        <end position="1028"/>
    </location>
</feature>
<feature type="helix" evidence="8">
    <location>
        <begin position="1035"/>
        <end position="1041"/>
    </location>
</feature>
<feature type="helix" evidence="8">
    <location>
        <begin position="1050"/>
        <end position="1055"/>
    </location>
</feature>
<feature type="strand" evidence="9">
    <location>
        <begin position="1056"/>
        <end position="1058"/>
    </location>
</feature>
<feature type="helix" evidence="8">
    <location>
        <begin position="1068"/>
        <end position="1081"/>
    </location>
</feature>
<feature type="helix" evidence="8">
    <location>
        <begin position="1087"/>
        <end position="1089"/>
    </location>
</feature>
<feature type="turn" evidence="8">
    <location>
        <begin position="1090"/>
        <end position="1092"/>
    </location>
</feature>
<feature type="helix" evidence="8">
    <location>
        <begin position="1097"/>
        <end position="1109"/>
    </location>
</feature>
<feature type="strand" evidence="8">
    <location>
        <begin position="1111"/>
        <end position="1114"/>
    </location>
</feature>
<feature type="helix" evidence="8">
    <location>
        <begin position="1116"/>
        <end position="1119"/>
    </location>
</feature>
<feature type="helix" evidence="8">
    <location>
        <begin position="1122"/>
        <end position="1125"/>
    </location>
</feature>
<feature type="helix" evidence="8">
    <location>
        <begin position="1128"/>
        <end position="1137"/>
    </location>
</feature>
<feature type="helix" evidence="8">
    <location>
        <begin position="1142"/>
        <end position="1152"/>
    </location>
</feature>
<feature type="helix" evidence="8">
    <location>
        <begin position="1156"/>
        <end position="1163"/>
    </location>
</feature>
<feature type="helix" evidence="8">
    <location>
        <begin position="1165"/>
        <end position="1177"/>
    </location>
</feature>
<feature type="turn" evidence="8">
    <location>
        <begin position="1187"/>
        <end position="1189"/>
    </location>
</feature>
<feature type="helix" evidence="8">
    <location>
        <begin position="1192"/>
        <end position="1203"/>
    </location>
</feature>
<feature type="turn" evidence="8">
    <location>
        <begin position="1204"/>
        <end position="1207"/>
    </location>
</feature>
<feature type="strand" evidence="8">
    <location>
        <begin position="1208"/>
        <end position="1210"/>
    </location>
</feature>
<feature type="turn" evidence="8">
    <location>
        <begin position="1222"/>
        <end position="1224"/>
    </location>
</feature>
<feature type="strand" evidence="8">
    <location>
        <begin position="1226"/>
        <end position="1230"/>
    </location>
</feature>
<feature type="turn" evidence="8">
    <location>
        <begin position="1237"/>
        <end position="1239"/>
    </location>
</feature>
<feature type="strand" evidence="8">
    <location>
        <begin position="1240"/>
        <end position="1242"/>
    </location>
</feature>
<feature type="strand" evidence="8">
    <location>
        <begin position="1249"/>
        <end position="1251"/>
    </location>
</feature>
<feature type="strand" evidence="9">
    <location>
        <begin position="1256"/>
        <end position="1258"/>
    </location>
</feature>
<feature type="strand" evidence="9">
    <location>
        <begin position="1268"/>
        <end position="1272"/>
    </location>
</feature>
<feature type="helix" evidence="8">
    <location>
        <begin position="1293"/>
        <end position="1308"/>
    </location>
</feature>
<feature type="helix" evidence="8">
    <location>
        <begin position="1312"/>
        <end position="1322"/>
    </location>
</feature>
<feature type="turn" evidence="9">
    <location>
        <begin position="1323"/>
        <end position="1325"/>
    </location>
</feature>
<feature type="helix" evidence="9">
    <location>
        <begin position="1330"/>
        <end position="1336"/>
    </location>
</feature>
<feature type="turn" evidence="8">
    <location>
        <begin position="1365"/>
        <end position="1368"/>
    </location>
</feature>
<feature type="strand" evidence="9">
    <location>
        <begin position="1371"/>
        <end position="1373"/>
    </location>
</feature>
<feature type="turn" evidence="10">
    <location>
        <begin position="1380"/>
        <end position="1383"/>
    </location>
</feature>
<feature type="strand" evidence="9">
    <location>
        <begin position="1388"/>
        <end position="1390"/>
    </location>
</feature>
<feature type="helix" evidence="8">
    <location>
        <begin position="1394"/>
        <end position="1406"/>
    </location>
</feature>
<feature type="turn" evidence="8">
    <location>
        <begin position="1407"/>
        <end position="1409"/>
    </location>
</feature>
<feature type="strand" evidence="8">
    <location>
        <begin position="1418"/>
        <end position="1423"/>
    </location>
</feature>
<feature type="strand" evidence="8">
    <location>
        <begin position="1427"/>
        <end position="1429"/>
    </location>
</feature>
<feature type="turn" evidence="9">
    <location>
        <begin position="1455"/>
        <end position="1457"/>
    </location>
</feature>
<comment type="function">
    <text evidence="2">RNA-directed RNA polymerase that catalyzes the transcription of viral mRNAs, their capping and polyadenylation. The template is composed of the viral RNA tightly encapsidated by the nucleoprotein (N). The viral polymerase binds to the genomic RNA at the 3' leader promoter, and transcribes subsequently all viral mRNAs with a decreasing efficiency. The first gene is the most transcribed, and the last the least transcribed. The viral phosphoprotein acts as a processivity factor. Capping is concomitant with initiation of mRNA transcription. Indeed, a GDP polyribonucleotidyl transferase (PRNTase) adds the cap structure when the nascent RNA chain length has reached few nucleotides. Ribose 2'-O methylation of viral mRNA cap precedes and facilitates subsequent guanine-N-7 methylation, both activities being carried by the viral polymerase. Polyadenylation of mRNAs occur by a stuttering mechanism at a slipery stop site present at the end viral genes. After finishing transcription of a mRNA, the polymerase can resume transcription of the downstream gene.</text>
</comment>
<comment type="function">
    <text evidence="2">RNA-directed RNA polymerase that catalyzes the replication of viral genomic RNA. The template is composed of the viral RNA tightly encapsidated by the nucleoprotein (N). The replicase mode is dependent on intracellular N protein concentration. In this mode, the polymerase replicates the whole viral genome without recognizing transcriptional signals, and the replicated genome is not caped or polyadenylated.</text>
</comment>
<comment type="catalytic activity">
    <reaction evidence="5">
        <text>RNA(n) + a ribonucleoside 5'-triphosphate = RNA(n+1) + diphosphate</text>
        <dbReference type="Rhea" id="RHEA:21248"/>
        <dbReference type="Rhea" id="RHEA-COMP:14527"/>
        <dbReference type="Rhea" id="RHEA-COMP:17342"/>
        <dbReference type="ChEBI" id="CHEBI:33019"/>
        <dbReference type="ChEBI" id="CHEBI:61557"/>
        <dbReference type="ChEBI" id="CHEBI:140395"/>
        <dbReference type="EC" id="2.7.7.48"/>
    </reaction>
</comment>
<comment type="catalytic activity">
    <reaction evidence="2">
        <text>a 5'-end (5'-triphosphoguanosine)-adenylyl-adenylyl-cytidylyl-adenosine in mRNA + 2 S-adenosyl-L-methionine = a 5'-end (N(7)-methyl 5'-triphosphoguanosine)-(2'-O-methyladenylyl)-adenylyl-cytidylyl-adenosine in mRNA + 2 S-adenosyl-L-homocysteine + H(+)</text>
        <dbReference type="Rhea" id="RHEA:65376"/>
        <dbReference type="Rhea" id="RHEA-COMP:16797"/>
        <dbReference type="Rhea" id="RHEA-COMP:16798"/>
        <dbReference type="ChEBI" id="CHEBI:15378"/>
        <dbReference type="ChEBI" id="CHEBI:57856"/>
        <dbReference type="ChEBI" id="CHEBI:59789"/>
        <dbReference type="ChEBI" id="CHEBI:156483"/>
        <dbReference type="ChEBI" id="CHEBI:156484"/>
        <dbReference type="EC" id="2.1.1.375"/>
    </reaction>
</comment>
<comment type="catalytic activity">
    <reaction evidence="2">
        <text>a 5'-end (5'-triphosphoguanosine)-adenylyl-adenylyl-cytidylyl-adenosine in mRNA + S-adenosyl-L-methionine = a 5'-end (5'-triphosphoguanosine)-(2'-O-methyladenylyl)-adenylyl-cytidylyl-adenosine in mRNA + S-adenosyl-L-homocysteine + H(+)</text>
        <dbReference type="Rhea" id="RHEA:65380"/>
        <dbReference type="Rhea" id="RHEA-COMP:16797"/>
        <dbReference type="Rhea" id="RHEA-COMP:16801"/>
        <dbReference type="ChEBI" id="CHEBI:15378"/>
        <dbReference type="ChEBI" id="CHEBI:57856"/>
        <dbReference type="ChEBI" id="CHEBI:59789"/>
        <dbReference type="ChEBI" id="CHEBI:156482"/>
        <dbReference type="ChEBI" id="CHEBI:156484"/>
    </reaction>
</comment>
<comment type="catalytic activity">
    <reaction evidence="3">
        <text>a 5'-end triphospho-adenylyl-adenylyl-cytidylyl-adenosine in mRNA + GDP + H(+) = a 5'-end (5'-triphosphoguanosine)-adenylyl-adenylyl-cytidylyl-adenosine in mRNA + diphosphate</text>
        <dbReference type="Rhea" id="RHEA:65436"/>
        <dbReference type="Rhea" id="RHEA-COMP:16797"/>
        <dbReference type="Rhea" id="RHEA-COMP:16799"/>
        <dbReference type="ChEBI" id="CHEBI:15378"/>
        <dbReference type="ChEBI" id="CHEBI:33019"/>
        <dbReference type="ChEBI" id="CHEBI:58189"/>
        <dbReference type="ChEBI" id="CHEBI:156484"/>
        <dbReference type="ChEBI" id="CHEBI:156503"/>
        <dbReference type="EC" id="2.7.7.88"/>
    </reaction>
</comment>
<comment type="catalytic activity">
    <reaction evidence="2">
        <text>a 5'-end (5'-triphosphoguanosine)-(2'-O-methyladenylyl)-adenylyl-cytidylyl-adenosine in mRNA + S-adenosyl-L-methionine = a 5'-end (N(7)-methyl 5'-triphosphoguanosine)-(2'-O-methyladenylyl)-adenylyl-cytidylyl-adenosine in mRNA + S-adenosyl-L-homocysteine</text>
        <dbReference type="Rhea" id="RHEA:65440"/>
        <dbReference type="Rhea" id="RHEA-COMP:16798"/>
        <dbReference type="Rhea" id="RHEA-COMP:16801"/>
        <dbReference type="ChEBI" id="CHEBI:57856"/>
        <dbReference type="ChEBI" id="CHEBI:59789"/>
        <dbReference type="ChEBI" id="CHEBI:156482"/>
        <dbReference type="ChEBI" id="CHEBI:156483"/>
    </reaction>
</comment>
<comment type="catalytic activity">
    <reaction evidence="3">
        <text>GTP + H2O = GDP + phosphate + H(+)</text>
        <dbReference type="Rhea" id="RHEA:19669"/>
        <dbReference type="ChEBI" id="CHEBI:15377"/>
        <dbReference type="ChEBI" id="CHEBI:15378"/>
        <dbReference type="ChEBI" id="CHEBI:37565"/>
        <dbReference type="ChEBI" id="CHEBI:43474"/>
        <dbReference type="ChEBI" id="CHEBI:58189"/>
    </reaction>
</comment>
<comment type="subunit">
    <text evidence="1">Interacts with the P protein.</text>
</comment>
<comment type="subcellular location">
    <subcellularLocation>
        <location evidence="7">Virion</location>
    </subcellularLocation>
    <subcellularLocation>
        <location evidence="1">Host cytoplasm</location>
    </subcellularLocation>
</comment>
<comment type="similarity">
    <text evidence="7">Belongs to the paramyxovirus L protein family.</text>
</comment>
<gene>
    <name type="primary">L</name>
</gene>
<name>L_NIPAV</name>
<dbReference type="EC" id="2.7.7.48" evidence="3"/>
<dbReference type="EC" id="3.6.1.-" evidence="2"/>
<dbReference type="EC" id="2.7.7.88" evidence="2"/>
<dbReference type="EC" id="2.1.1.375" evidence="2"/>
<dbReference type="EMBL" id="AF212302">
    <property type="protein sequence ID" value="AAK29089.1"/>
    <property type="molecule type" value="Genomic_RNA"/>
</dbReference>
<dbReference type="EMBL" id="AY029768">
    <property type="protein sequence ID" value="AAK50555.1"/>
    <property type="molecule type" value="Genomic_RNA"/>
</dbReference>
<dbReference type="EMBL" id="AJ564622">
    <property type="protein sequence ID" value="CAD92358.1"/>
    <property type="molecule type" value="Genomic_RNA"/>
</dbReference>
<dbReference type="EMBL" id="AY029767">
    <property type="protein sequence ID" value="AAK50546.1"/>
    <property type="molecule type" value="Genomic_RNA"/>
</dbReference>
<dbReference type="EMBL" id="AJ564621">
    <property type="protein sequence ID" value="CAD92352.1"/>
    <property type="molecule type" value="Genomic_RNA"/>
</dbReference>
<dbReference type="EMBL" id="AJ564623">
    <property type="protein sequence ID" value="CAD92364.1"/>
    <property type="molecule type" value="Genomic_RNA"/>
</dbReference>
<dbReference type="EMBL" id="AJ627196">
    <property type="protein sequence ID" value="CAF25498.1"/>
    <property type="molecule type" value="Genomic_RNA"/>
</dbReference>
<dbReference type="RefSeq" id="NP_112028.1">
    <property type="nucleotide sequence ID" value="NC_002728.1"/>
</dbReference>
<dbReference type="PDB" id="8ZPV">
    <property type="method" value="EM"/>
    <property type="resolution" value="2.90 A"/>
    <property type="chains" value="A=1-2244"/>
</dbReference>
<dbReference type="PDB" id="9BDQ">
    <property type="method" value="EM"/>
    <property type="resolution" value="2.26 A"/>
    <property type="chains" value="A=1-2244"/>
</dbReference>
<dbReference type="PDB" id="9CGI">
    <property type="method" value="EM"/>
    <property type="resolution" value="2.92 A"/>
    <property type="chains" value="A=1-2244"/>
</dbReference>
<dbReference type="PDB" id="9FTF">
    <property type="method" value="X-ray"/>
    <property type="resolution" value="1.85 A"/>
    <property type="chains" value="A=1481-1743"/>
</dbReference>
<dbReference type="PDB" id="9FUX">
    <property type="method" value="EM"/>
    <property type="resolution" value="2.49 A"/>
    <property type="chains" value="A=2-2244"/>
</dbReference>
<dbReference type="PDB" id="9GJT">
    <property type="method" value="EM"/>
    <property type="resolution" value="2.60 A"/>
    <property type="chains" value="A=2-2244"/>
</dbReference>
<dbReference type="PDB" id="9GJU">
    <property type="method" value="EM"/>
    <property type="resolution" value="2.80 A"/>
    <property type="chains" value="A=2-2244"/>
</dbReference>
<dbReference type="PDB" id="9IR3">
    <property type="method" value="EM"/>
    <property type="resolution" value="3.19 A"/>
    <property type="chains" value="A=1-2244"/>
</dbReference>
<dbReference type="PDB" id="9IR4">
    <property type="method" value="EM"/>
    <property type="resolution" value="3.01 A"/>
    <property type="chains" value="A=1-2244"/>
</dbReference>
<dbReference type="PDBsum" id="8ZPV"/>
<dbReference type="PDBsum" id="9BDQ"/>
<dbReference type="PDBsum" id="9CGI"/>
<dbReference type="PDBsum" id="9FTF"/>
<dbReference type="PDBsum" id="9FUX"/>
<dbReference type="PDBsum" id="9GJT"/>
<dbReference type="PDBsum" id="9GJU"/>
<dbReference type="PDBsum" id="9IR3"/>
<dbReference type="PDBsum" id="9IR4"/>
<dbReference type="EMDB" id="EMD-45580"/>
<dbReference type="EMDB" id="EMD-50781"/>
<dbReference type="EMDB" id="EMD-51402"/>
<dbReference type="EMDB" id="EMD-51403"/>
<dbReference type="EMDB" id="EMD-60355"/>
<dbReference type="EMDB" id="EMD-60799"/>
<dbReference type="EMDB" id="EMD-60800"/>
<dbReference type="SMR" id="Q997F0"/>
<dbReference type="GeneID" id="920950"/>
<dbReference type="KEGG" id="vg:920950"/>
<dbReference type="Proteomes" id="UP000002330">
    <property type="component" value="Segment"/>
</dbReference>
<dbReference type="Proteomes" id="UP000007527">
    <property type="component" value="Segment"/>
</dbReference>
<dbReference type="Proteomes" id="UP000008676">
    <property type="component" value="Segment"/>
</dbReference>
<dbReference type="Proteomes" id="UP000100567">
    <property type="component" value="Segment"/>
</dbReference>
<dbReference type="Proteomes" id="UP000110983">
    <property type="component" value="Segment"/>
</dbReference>
<dbReference type="Proteomes" id="UP000130871">
    <property type="component" value="Segment"/>
</dbReference>
<dbReference type="Proteomes" id="UP000170143">
    <property type="component" value="Segment"/>
</dbReference>
<dbReference type="GO" id="GO:0030430">
    <property type="term" value="C:host cell cytoplasm"/>
    <property type="evidence" value="ECO:0007669"/>
    <property type="project" value="UniProtKB-SubCell"/>
</dbReference>
<dbReference type="GO" id="GO:0044423">
    <property type="term" value="C:virion component"/>
    <property type="evidence" value="ECO:0007669"/>
    <property type="project" value="UniProtKB-KW"/>
</dbReference>
<dbReference type="GO" id="GO:0005524">
    <property type="term" value="F:ATP binding"/>
    <property type="evidence" value="ECO:0007669"/>
    <property type="project" value="UniProtKB-KW"/>
</dbReference>
<dbReference type="GO" id="GO:0003924">
    <property type="term" value="F:GTPase activity"/>
    <property type="evidence" value="ECO:0007669"/>
    <property type="project" value="RHEA"/>
</dbReference>
<dbReference type="GO" id="GO:0004482">
    <property type="term" value="F:mRNA 5'-cap (guanine-N7-)-methyltransferase activity"/>
    <property type="evidence" value="ECO:0007669"/>
    <property type="project" value="InterPro"/>
</dbReference>
<dbReference type="GO" id="GO:0003968">
    <property type="term" value="F:RNA-directed RNA polymerase activity"/>
    <property type="evidence" value="ECO:0007669"/>
    <property type="project" value="UniProtKB-KW"/>
</dbReference>
<dbReference type="GO" id="GO:0039689">
    <property type="term" value="P:negative stranded viral RNA replication"/>
    <property type="evidence" value="ECO:0000314"/>
    <property type="project" value="UniProtKB"/>
</dbReference>
<dbReference type="GO" id="GO:0039697">
    <property type="term" value="P:negative stranded viral RNA transcription"/>
    <property type="evidence" value="ECO:0000314"/>
    <property type="project" value="UniProtKB"/>
</dbReference>
<dbReference type="InterPro" id="IPR039736">
    <property type="entry name" value="L_poly_C"/>
</dbReference>
<dbReference type="InterPro" id="IPR026890">
    <property type="entry name" value="Mononeg_mRNAcap"/>
</dbReference>
<dbReference type="InterPro" id="IPR014023">
    <property type="entry name" value="Mononeg_RNA_pol_cat"/>
</dbReference>
<dbReference type="InterPro" id="IPR025786">
    <property type="entry name" value="Mononega_L_MeTrfase"/>
</dbReference>
<dbReference type="InterPro" id="IPR016269">
    <property type="entry name" value="RNA-dir_pol_paramyxovirus"/>
</dbReference>
<dbReference type="InterPro" id="IPR002877">
    <property type="entry name" value="RNA_MeTrfase_FtsJ_dom"/>
</dbReference>
<dbReference type="NCBIfam" id="TIGR04198">
    <property type="entry name" value="paramyx_RNAcap"/>
    <property type="match status" value="1"/>
</dbReference>
<dbReference type="Pfam" id="PF01728">
    <property type="entry name" value="FtsJ"/>
    <property type="match status" value="1"/>
</dbReference>
<dbReference type="Pfam" id="PF14318">
    <property type="entry name" value="Mononeg_mRNAcap"/>
    <property type="match status" value="1"/>
</dbReference>
<dbReference type="Pfam" id="PF00946">
    <property type="entry name" value="Mononeg_RNA_pol"/>
    <property type="match status" value="1"/>
</dbReference>
<dbReference type="PIRSF" id="PIRSF000830">
    <property type="entry name" value="RNA_pol_ParamyxoV"/>
    <property type="match status" value="1"/>
</dbReference>
<dbReference type="PROSITE" id="PS50526">
    <property type="entry name" value="RDRP_SSRNA_NEG_NONSEG"/>
    <property type="match status" value="1"/>
</dbReference>
<dbReference type="PROSITE" id="PS51590">
    <property type="entry name" value="SAM_MT_MNV_L"/>
    <property type="match status" value="1"/>
</dbReference>
<keyword id="KW-0002">3D-structure</keyword>
<keyword id="KW-0067">ATP-binding</keyword>
<keyword id="KW-1035">Host cytoplasm</keyword>
<keyword id="KW-0378">Hydrolase</keyword>
<keyword id="KW-0489">Methyltransferase</keyword>
<keyword id="KW-0506">mRNA capping</keyword>
<keyword id="KW-0507">mRNA processing</keyword>
<keyword id="KW-0511">Multifunctional enzyme</keyword>
<keyword id="KW-0547">Nucleotide-binding</keyword>
<keyword id="KW-0548">Nucleotidyltransferase</keyword>
<keyword id="KW-0696">RNA-directed RNA polymerase</keyword>
<keyword id="KW-0949">S-adenosyl-L-methionine</keyword>
<keyword id="KW-0808">Transferase</keyword>
<keyword id="KW-0693">Viral RNA replication</keyword>
<keyword id="KW-0946">Virion</keyword>
<proteinExistence type="evidence at protein level"/>
<evidence type="ECO:0000250" key="1"/>
<evidence type="ECO:0000250" key="2">
    <source>
        <dbReference type="UniProtKB" id="P03523"/>
    </source>
</evidence>
<evidence type="ECO:0000250" key="3">
    <source>
        <dbReference type="UniProtKB" id="P28887"/>
    </source>
</evidence>
<evidence type="ECO:0000255" key="4"/>
<evidence type="ECO:0000255" key="5">
    <source>
        <dbReference type="PROSITE-ProRule" id="PRU00539"/>
    </source>
</evidence>
<evidence type="ECO:0000255" key="6">
    <source>
        <dbReference type="PROSITE-ProRule" id="PRU00923"/>
    </source>
</evidence>
<evidence type="ECO:0000305" key="7"/>
<evidence type="ECO:0007829" key="8">
    <source>
        <dbReference type="PDB" id="8ZPV"/>
    </source>
</evidence>
<evidence type="ECO:0007829" key="9">
    <source>
        <dbReference type="PDB" id="9CGI"/>
    </source>
</evidence>
<evidence type="ECO:0007829" key="10">
    <source>
        <dbReference type="PDB" id="9IR4"/>
    </source>
</evidence>
<sequence length="2244" mass="257233">MADELSISDIIYPECHLDSPIVSGKLISAIEYAQLRHNQPSDDKRLSENIRLNLHGKRKSLYILRQSKQGDYIRNNIKNLKEFMHIAYPECNNILFSITSQGMTSKLDNIMKKSFKAYNIISKKVIGMLQNITRNLITQDRRDEIINIHECRRLGDLGKNMSQSKWYECFLFWFTIKTEMRAVIKNSQKPKFRSDSCIIHMRDKSTEIILNPNLICIFKSDKTGKKCYYLTPEMVLMYCDVLEGRMMMETTVKSDIKYQPLISRSNALWGLIDPLFPVMGNRIYNIVSMIEPLVLALLQLKDEARILRGAFLHHCIKEMHQELSECGFTDQKIRSMFIDDLLSILNIDNIHLLAEFFSFFRTFGHPILEAKVAAEKVREHMLADKVLEYAPIMKAHAIFCGTIINGYRDRHGGAWPPLYLPAHASKHIIRLKNSGESLTIDDCVKNWESFCGIQFDCFMELKLDSDLSMYMKDKALSPIKDEWDSVYPREVLSYTPPKSTEPRRLVDVFVNDENFDPYNMLEYVLSGAYLEDEQFNVSYSLKEKETKQAGRLFAKMTYKMRACQVIAEALIASGVGKYFKENGMVKDEHELLKTLFQLSISSVPRGNSQGNDPQSINNIERDFQYFKGVTTNVKDKKNNSFNKVKSALNNPCQADGVHHNMSPNTRNRYKCSNTSKSFLDYHTEFNPHNHYKSDNTEAAVLSRYEDNTGTKFDTVSAFLTTDLKKFCLNWRYESMAIFAERLDEIYGLPGFFNWMHKRLERSVIYVADPNCPPNIDKHMELEKTPEDDIFIHYPKGGIEGYSQKTWTIATIPFLFLSAYETNTRIAAIVQGDNESIAITQKVHPNLPYKVKKEICAKQAQLYFERLRMNLRALGHNLKATETIISTHLFIYSKKIHYDGAVLSQALKSMSRCCFWSETLVDETRSACSNISTTIAKAIENGLSRNVGYCINILKVIQQLLISTEFSINETLTLDVTSPISNNLDWLITAALIPAPIGGFNYLNLSRIFVRNIGDPVTASLADLKRMIDHSIMTESVLQKVMNQEPGDASFLDWASDPYSGNLPDSQSITKTIKNITARTILRNSPNPMLKGLFHDKSFDEDLELASFLMDRRVILPRAAHEILDNSLTGAREEIAGLLDTTKGLIRSGLRKSGLQPKLVSRLSHHDYNQFLILNKLLSNRRQNDLISSNTCSVDLARALRSHMWRELALGRVIYGLEVPDALEAMVGRYITGSLECQICEQGNTMYGWFFVPRDSQLDQVDREHSSIRVPYVGSSTDERSDIKLGNVKRPTKALRSAIRIATVYTWAYGDNEECWYEAWYLASQRVNIDLDVLKAITPVSTSNNLSHRLRDKSTQFKFAGSVLNRVSRYVNISNDNLDFRIEGEKVDTNLIYQQAMLLGLSVLEGKFRLRLETDDYNGIYHLHVKDNCCVKEVADVGQVDAELPIPEYTEVDNNHLIYDPDPVSEIDCSRLSNQESKSRELDFPLWSTEELHDVLAKTVAQTVLEIITKADKDVLKQHLAIDSDDNINSLITEFLIVDPELFALYLGQSISIKWAFEIHHRRPRGRHTMVDLLSDLVSNTSKHTYKVLSNALSHPRVFKRFVNCGLLLPTQGPYLHQQDFEKLSQNLLVTSYMIYLMNWCDFKKSPFLIAEQDETVISLREDIITSKHLCVIIDLYANHHKPPWIIDLNPQEKICVLRDFISKSRHVDTSSRSWNTSDLDFVIFYASLTYLRRGIIKQLRIRQVTEVIDTTTMLRDNIIVENPPIKTGVLDIRGCIIYNLEEILSMNTKSASKKIFNLNSRPSVENHKYRRIGLNSSSCYKALNLSPLIQRYLPSGAQRLFIGEGSGSMMLLYQSTLGQSISFYNSGIDGDYIPGQRELKLFPSEYSIAEEDPSLTGKLKGLVVPLFNGRPETTWIGNLDSYEYIINRTAGRSIGLVHSDMESGIDKNVEEILVEHSHLISIAINVMMEDGLLVSKIAYTPGFPISRLFNMYRSYFGLVLVCFPVYSNPDSTEVYLLCLQKTVKTIVPPQKVLEHSNLHDEVNDQGITSVIFKIKNSQSKQFHDDLKKYYQIDQPFFVPTKITSDEQVLLQAGLKLNGPEILKSEISYDIGSDINTLRDTIIIMLNEAMNYFDDNRSPSHHLEPYPVLERTRIKTIMNCVTKKVIVYSLIKFKDTKSSELYHIKNNIRRKVLILDFRSKLMTKTLPKGMQERREKNGFKEVWIVDLSNREVKIWWKIIGYISII</sequence>
<organismHost>
    <name type="scientific">Cynopterus brachyotis</name>
    <name type="common">Lesser short-nosed fruit bat</name>
    <name type="synonym">Pachysoma brachyotis</name>
    <dbReference type="NCBI Taxonomy" id="58060"/>
</organismHost>
<organismHost>
    <name type="scientific">Eonycteris spelaea</name>
    <name type="common">Lesser dawn bat</name>
    <name type="synonym">Macroglossus spelaeus</name>
    <dbReference type="NCBI Taxonomy" id="58065"/>
</organismHost>
<organismHost>
    <name type="scientific">Homo sapiens</name>
    <name type="common">Human</name>
    <dbReference type="NCBI Taxonomy" id="9606"/>
</organismHost>
<organismHost>
    <name type="scientific">Pteropus hypomelanus</name>
    <name type="common">Island flying fox</name>
    <name type="synonym">Variable flying fox</name>
    <dbReference type="NCBI Taxonomy" id="9405"/>
</organismHost>
<organismHost>
    <name type="scientific">Pteropus vampyrus</name>
    <name type="common">Large flying fox</name>
    <dbReference type="NCBI Taxonomy" id="132908"/>
</organismHost>
<organismHost>
    <name type="scientific">Scotophilus kuhlii</name>
    <name type="common">Lesser asiatic yellow bat</name>
    <dbReference type="NCBI Taxonomy" id="153297"/>
</organismHost>
<organismHost>
    <name type="scientific">Sus scrofa</name>
    <name type="common">Pig</name>
    <dbReference type="NCBI Taxonomy" id="9823"/>
</organismHost>
<accession>Q997F0</accession>
<accession>Q5K4D7</accession>
<accession>Q914E5</accession>